<dbReference type="EMBL" id="J02988">
    <property type="protein sequence ID" value="AAA60581.1"/>
    <property type="molecule type" value="mRNA"/>
</dbReference>
<dbReference type="EMBL" id="M37815">
    <property type="protein sequence ID" value="AAA51944.1"/>
    <property type="molecule type" value="Genomic_DNA"/>
</dbReference>
<dbReference type="EMBL" id="M37812">
    <property type="protein sequence ID" value="AAA51944.1"/>
    <property type="status" value="JOINED"/>
    <property type="molecule type" value="Genomic_DNA"/>
</dbReference>
<dbReference type="EMBL" id="M37813">
    <property type="protein sequence ID" value="AAA51944.1"/>
    <property type="status" value="JOINED"/>
    <property type="molecule type" value="Genomic_DNA"/>
</dbReference>
<dbReference type="EMBL" id="M37814">
    <property type="protein sequence ID" value="AAA51944.1"/>
    <property type="status" value="JOINED"/>
    <property type="molecule type" value="Genomic_DNA"/>
</dbReference>
<dbReference type="EMBL" id="M37815">
    <property type="protein sequence ID" value="AAA51945.1"/>
    <property type="molecule type" value="Genomic_DNA"/>
</dbReference>
<dbReference type="EMBL" id="M37812">
    <property type="protein sequence ID" value="AAA51945.1"/>
    <property type="status" value="JOINED"/>
    <property type="molecule type" value="Genomic_DNA"/>
</dbReference>
<dbReference type="EMBL" id="M37813">
    <property type="protein sequence ID" value="AAA51945.1"/>
    <property type="status" value="JOINED"/>
    <property type="molecule type" value="Genomic_DNA"/>
</dbReference>
<dbReference type="EMBL" id="M37814">
    <property type="protein sequence ID" value="AAA51945.1"/>
    <property type="status" value="JOINED"/>
    <property type="molecule type" value="Genomic_DNA"/>
</dbReference>
<dbReference type="EMBL" id="AJ295273">
    <property type="protein sequence ID" value="CAC29237.1"/>
    <property type="molecule type" value="mRNA"/>
</dbReference>
<dbReference type="EMBL" id="AF222341">
    <property type="protein sequence ID" value="AAF33792.1"/>
    <property type="molecule type" value="mRNA"/>
</dbReference>
<dbReference type="EMBL" id="AF222342">
    <property type="protein sequence ID" value="AAF33793.1"/>
    <property type="molecule type" value="mRNA"/>
</dbReference>
<dbReference type="EMBL" id="AF222343">
    <property type="protein sequence ID" value="AAF33794.1"/>
    <property type="molecule type" value="mRNA"/>
</dbReference>
<dbReference type="EMBL" id="AJ517504">
    <property type="protein sequence ID" value="CAD57003.1"/>
    <property type="molecule type" value="mRNA"/>
</dbReference>
<dbReference type="EMBL" id="EF064755">
    <property type="protein sequence ID" value="ABK41938.1"/>
    <property type="molecule type" value="Genomic_DNA"/>
</dbReference>
<dbReference type="EMBL" id="AK292986">
    <property type="protein sequence ID" value="BAF85675.1"/>
    <property type="molecule type" value="mRNA"/>
</dbReference>
<dbReference type="EMBL" id="AK313313">
    <property type="protein sequence ID" value="BAG36118.1"/>
    <property type="molecule type" value="mRNA"/>
</dbReference>
<dbReference type="EMBL" id="AC125238">
    <property type="protein sequence ID" value="AAY24123.1"/>
    <property type="molecule type" value="Genomic_DNA"/>
</dbReference>
<dbReference type="EMBL" id="CH471063">
    <property type="protein sequence ID" value="EAW70348.1"/>
    <property type="molecule type" value="Genomic_DNA"/>
</dbReference>
<dbReference type="EMBL" id="BC093698">
    <property type="protein sequence ID" value="AAH93698.1"/>
    <property type="molecule type" value="mRNA"/>
</dbReference>
<dbReference type="EMBL" id="BC112085">
    <property type="protein sequence ID" value="AAI12086.1"/>
    <property type="molecule type" value="mRNA"/>
</dbReference>
<dbReference type="EMBL" id="AF411057">
    <property type="protein sequence ID" value="AAL40931.1"/>
    <property type="molecule type" value="Genomic_DNA"/>
</dbReference>
<dbReference type="CCDS" id="CCDS2361.1">
    <molecule id="P10747-1"/>
</dbReference>
<dbReference type="CCDS" id="CCDS58749.1">
    <molecule id="P10747-2"/>
</dbReference>
<dbReference type="CCDS" id="CCDS92935.1">
    <molecule id="P10747-7"/>
</dbReference>
<dbReference type="PIR" id="A39983">
    <property type="entry name" value="RWHU28"/>
</dbReference>
<dbReference type="RefSeq" id="NP_001230006.1">
    <molecule id="P10747-4"/>
    <property type="nucleotide sequence ID" value="NM_001243077.2"/>
</dbReference>
<dbReference type="RefSeq" id="NP_001230007.1">
    <molecule id="P10747-2"/>
    <property type="nucleotide sequence ID" value="NM_001243078.2"/>
</dbReference>
<dbReference type="RefSeq" id="NP_001397910.1">
    <molecule id="P10747-7"/>
    <property type="nucleotide sequence ID" value="NM_001410981.1"/>
</dbReference>
<dbReference type="RefSeq" id="NP_006130.1">
    <molecule id="P10747-1"/>
    <property type="nucleotide sequence ID" value="NM_006139.4"/>
</dbReference>
<dbReference type="RefSeq" id="XP_011510496.1">
    <property type="nucleotide sequence ID" value="XM_011512194.2"/>
</dbReference>
<dbReference type="RefSeq" id="XP_011510499.1">
    <property type="nucleotide sequence ID" value="XM_011512197.2"/>
</dbReference>
<dbReference type="PDB" id="1YJD">
    <property type="method" value="X-ray"/>
    <property type="resolution" value="2.70 A"/>
    <property type="chains" value="C=17-152"/>
</dbReference>
<dbReference type="PDB" id="3WA4">
    <property type="method" value="X-ray"/>
    <property type="resolution" value="1.35 A"/>
    <property type="chains" value="B=189-196"/>
</dbReference>
<dbReference type="PDB" id="5AUL">
    <property type="method" value="X-ray"/>
    <property type="resolution" value="1.10 A"/>
    <property type="chains" value="B=189-196"/>
</dbReference>
<dbReference type="PDB" id="5GJH">
    <property type="method" value="X-ray"/>
    <property type="resolution" value="1.20 A"/>
    <property type="chains" value="B/D=189-196"/>
</dbReference>
<dbReference type="PDB" id="5GJI">
    <property type="method" value="X-ray"/>
    <property type="resolution" value="0.90 A"/>
    <property type="chains" value="B=189-196"/>
</dbReference>
<dbReference type="PDB" id="6O8D">
    <property type="method" value="X-ray"/>
    <property type="resolution" value="3.55 A"/>
    <property type="chains" value="C=19-136"/>
</dbReference>
<dbReference type="PDB" id="7PPN">
    <property type="method" value="X-ray"/>
    <property type="resolution" value="1.90 A"/>
    <property type="chains" value="B=183-198"/>
</dbReference>
<dbReference type="PDB" id="7VU5">
    <property type="method" value="NMR"/>
    <property type="chains" value="A/B=148-188"/>
</dbReference>
<dbReference type="PDB" id="8S6Z">
    <property type="method" value="X-ray"/>
    <property type="resolution" value="3.05 A"/>
    <property type="chains" value="C/F=19-152"/>
</dbReference>
<dbReference type="PDB" id="8W2V">
    <property type="method" value="NMR"/>
    <property type="chains" value="A=114-152"/>
</dbReference>
<dbReference type="PDBsum" id="1YJD"/>
<dbReference type="PDBsum" id="3WA4"/>
<dbReference type="PDBsum" id="5AUL"/>
<dbReference type="PDBsum" id="5GJH"/>
<dbReference type="PDBsum" id="5GJI"/>
<dbReference type="PDBsum" id="6O8D"/>
<dbReference type="PDBsum" id="7PPN"/>
<dbReference type="PDBsum" id="7VU5"/>
<dbReference type="PDBsum" id="8S6Z"/>
<dbReference type="PDBsum" id="8W2V"/>
<dbReference type="SMR" id="P10747"/>
<dbReference type="BioGRID" id="107378">
    <property type="interactions" value="27"/>
</dbReference>
<dbReference type="CORUM" id="P10747"/>
<dbReference type="DIP" id="DIP-6043N"/>
<dbReference type="ELM" id="P10747"/>
<dbReference type="FunCoup" id="P10747">
    <property type="interactions" value="343"/>
</dbReference>
<dbReference type="IntAct" id="P10747">
    <property type="interactions" value="19"/>
</dbReference>
<dbReference type="MINT" id="P10747"/>
<dbReference type="STRING" id="9606.ENSP00000324890"/>
<dbReference type="ChEMBL" id="CHEMBL5191"/>
<dbReference type="GuidetoPHARMACOLOGY" id="2863"/>
<dbReference type="GlyCosmos" id="P10747">
    <property type="glycosylation" value="5 sites, No reported glycans"/>
</dbReference>
<dbReference type="GlyGen" id="P10747">
    <property type="glycosylation" value="5 sites, 4 N-linked glycans (1 site)"/>
</dbReference>
<dbReference type="iPTMnet" id="P10747"/>
<dbReference type="PhosphoSitePlus" id="P10747"/>
<dbReference type="BioMuta" id="CD28"/>
<dbReference type="DMDM" id="115973"/>
<dbReference type="MassIVE" id="P10747"/>
<dbReference type="PaxDb" id="9606-ENSP00000324890"/>
<dbReference type="PeptideAtlas" id="P10747"/>
<dbReference type="ProteomicsDB" id="52645">
    <molecule id="P10747-1"/>
</dbReference>
<dbReference type="ProteomicsDB" id="52646">
    <molecule id="P10747-2"/>
</dbReference>
<dbReference type="ProteomicsDB" id="52647">
    <molecule id="P10747-3"/>
</dbReference>
<dbReference type="ProteomicsDB" id="52648">
    <molecule id="P10747-4"/>
</dbReference>
<dbReference type="ProteomicsDB" id="68570"/>
<dbReference type="ABCD" id="P10747">
    <property type="antibodies" value="17 sequenced antibodies"/>
</dbReference>
<dbReference type="Antibodypedia" id="19958">
    <property type="antibodies" value="3184 antibodies from 49 providers"/>
</dbReference>
<dbReference type="DNASU" id="940"/>
<dbReference type="Ensembl" id="ENST00000324106.9">
    <molecule id="P10747-1"/>
    <property type="protein sequence ID" value="ENSP00000324890.7"/>
    <property type="gene ID" value="ENSG00000178562.19"/>
</dbReference>
<dbReference type="Ensembl" id="ENST00000374481.8">
    <molecule id="P10747-2"/>
    <property type="protein sequence ID" value="ENSP00000363605.4"/>
    <property type="gene ID" value="ENSG00000178562.19"/>
</dbReference>
<dbReference type="Ensembl" id="ENST00000458610.6">
    <molecule id="P10747-7"/>
    <property type="protein sequence ID" value="ENSP00000393648.2"/>
    <property type="gene ID" value="ENSG00000178562.19"/>
</dbReference>
<dbReference type="GeneID" id="940"/>
<dbReference type="KEGG" id="hsa:940"/>
<dbReference type="MANE-Select" id="ENST00000324106.9">
    <property type="protein sequence ID" value="ENSP00000324890.7"/>
    <property type="RefSeq nucleotide sequence ID" value="NM_006139.4"/>
    <property type="RefSeq protein sequence ID" value="NP_006130.1"/>
</dbReference>
<dbReference type="UCSC" id="uc002vah.6">
    <molecule id="P10747-1"/>
    <property type="organism name" value="human"/>
</dbReference>
<dbReference type="AGR" id="HGNC:1653"/>
<dbReference type="CTD" id="940"/>
<dbReference type="DisGeNET" id="940"/>
<dbReference type="GeneCards" id="CD28"/>
<dbReference type="HGNC" id="HGNC:1653">
    <property type="gene designation" value="CD28"/>
</dbReference>
<dbReference type="HPA" id="ENSG00000178562">
    <property type="expression patterns" value="Group enriched (lymphoid tissue, placenta)"/>
</dbReference>
<dbReference type="MalaCards" id="CD28"/>
<dbReference type="MIM" id="186760">
    <property type="type" value="gene"/>
</dbReference>
<dbReference type="MIM" id="620901">
    <property type="type" value="phenotype"/>
</dbReference>
<dbReference type="neXtProt" id="NX_P10747"/>
<dbReference type="OpenTargets" id="ENSG00000178562"/>
<dbReference type="Orphanet" id="2584">
    <property type="disease" value="Classic mycosis fungoides"/>
</dbReference>
<dbReference type="Orphanet" id="3162">
    <property type="disease" value="Sezary syndrome"/>
</dbReference>
<dbReference type="PharmGKB" id="PA26207"/>
<dbReference type="VEuPathDB" id="HostDB:ENSG00000178562"/>
<dbReference type="eggNOG" id="ENOG502SAVP">
    <property type="taxonomic scope" value="Eukaryota"/>
</dbReference>
<dbReference type="GeneTree" id="ENSGT00530000063873"/>
<dbReference type="HOGENOM" id="CLU_154699_0_0_1"/>
<dbReference type="InParanoid" id="P10747"/>
<dbReference type="OMA" id="YSHQLQF"/>
<dbReference type="OrthoDB" id="8654606at2759"/>
<dbReference type="PAN-GO" id="P10747">
    <property type="GO annotations" value="5 GO annotations based on evolutionary models"/>
</dbReference>
<dbReference type="PhylomeDB" id="P10747"/>
<dbReference type="TreeFam" id="TF335679"/>
<dbReference type="PathwayCommons" id="P10747"/>
<dbReference type="Reactome" id="R-HSA-1257604">
    <property type="pathway name" value="PIP3 activates AKT signaling"/>
</dbReference>
<dbReference type="Reactome" id="R-HSA-164939">
    <property type="pathway name" value="Nef mediated downregulation of CD28 cell surface expression"/>
</dbReference>
<dbReference type="Reactome" id="R-HSA-2219530">
    <property type="pathway name" value="Constitutive Signaling by Aberrant PI3K in Cancer"/>
</dbReference>
<dbReference type="Reactome" id="R-HSA-389356">
    <property type="pathway name" value="Co-stimulation by CD28"/>
</dbReference>
<dbReference type="Reactome" id="R-HSA-389357">
    <property type="pathway name" value="CD28 dependent PI3K/Akt signaling"/>
</dbReference>
<dbReference type="Reactome" id="R-HSA-389359">
    <property type="pathway name" value="CD28 dependent Vav1 pathway"/>
</dbReference>
<dbReference type="Reactome" id="R-HSA-6811558">
    <property type="pathway name" value="PI5P, PP2A and IER3 Regulate PI3K/AKT Signaling"/>
</dbReference>
<dbReference type="SignaLink" id="P10747"/>
<dbReference type="SIGNOR" id="P10747"/>
<dbReference type="BioGRID-ORCS" id="940">
    <property type="hits" value="21 hits in 1163 CRISPR screens"/>
</dbReference>
<dbReference type="ChiTaRS" id="CD28">
    <property type="organism name" value="human"/>
</dbReference>
<dbReference type="EvolutionaryTrace" id="P10747"/>
<dbReference type="GeneWiki" id="CD28"/>
<dbReference type="GenomeRNAi" id="940"/>
<dbReference type="Pharos" id="P10747">
    <property type="development level" value="Tbio"/>
</dbReference>
<dbReference type="PRO" id="PR:P10747"/>
<dbReference type="Proteomes" id="UP000005640">
    <property type="component" value="Chromosome 2"/>
</dbReference>
<dbReference type="RNAct" id="P10747">
    <property type="molecule type" value="protein"/>
</dbReference>
<dbReference type="Bgee" id="ENSG00000178562">
    <property type="expression patterns" value="Expressed in lymph node and 99 other cell types or tissues"/>
</dbReference>
<dbReference type="GO" id="GO:0009986">
    <property type="term" value="C:cell surface"/>
    <property type="evidence" value="ECO:0000314"/>
    <property type="project" value="UniProtKB"/>
</dbReference>
<dbReference type="GO" id="GO:0005829">
    <property type="term" value="C:cytosol"/>
    <property type="evidence" value="ECO:0000304"/>
    <property type="project" value="Reactome"/>
</dbReference>
<dbReference type="GO" id="GO:0009897">
    <property type="term" value="C:external side of plasma membrane"/>
    <property type="evidence" value="ECO:0000314"/>
    <property type="project" value="MGI"/>
</dbReference>
<dbReference type="GO" id="GO:0001772">
    <property type="term" value="C:immunological synapse"/>
    <property type="evidence" value="ECO:0007669"/>
    <property type="project" value="Ensembl"/>
</dbReference>
<dbReference type="GO" id="GO:0005886">
    <property type="term" value="C:plasma membrane"/>
    <property type="evidence" value="ECO:0000314"/>
    <property type="project" value="HPA"/>
</dbReference>
<dbReference type="GO" id="GO:0098636">
    <property type="term" value="C:protein complex involved in cell adhesion"/>
    <property type="evidence" value="ECO:0000314"/>
    <property type="project" value="MGI"/>
</dbReference>
<dbReference type="GO" id="GO:0015026">
    <property type="term" value="F:coreceptor activity"/>
    <property type="evidence" value="ECO:0000304"/>
    <property type="project" value="UniProtKB"/>
</dbReference>
<dbReference type="GO" id="GO:0042802">
    <property type="term" value="F:identical protein binding"/>
    <property type="evidence" value="ECO:0000303"/>
    <property type="project" value="UniProtKB"/>
</dbReference>
<dbReference type="GO" id="GO:0019901">
    <property type="term" value="F:protein kinase binding"/>
    <property type="evidence" value="ECO:0007669"/>
    <property type="project" value="Ensembl"/>
</dbReference>
<dbReference type="GO" id="GO:0097190">
    <property type="term" value="P:apoptotic signaling pathway"/>
    <property type="evidence" value="ECO:0007669"/>
    <property type="project" value="Ensembl"/>
</dbReference>
<dbReference type="GO" id="GO:0035739">
    <property type="term" value="P:CD4-positive, alpha-beta T cell proliferation"/>
    <property type="evidence" value="ECO:0007669"/>
    <property type="project" value="Ensembl"/>
</dbReference>
<dbReference type="GO" id="GO:0007166">
    <property type="term" value="P:cell surface receptor signaling pathway"/>
    <property type="evidence" value="ECO:0000304"/>
    <property type="project" value="UniProtKB"/>
</dbReference>
<dbReference type="GO" id="GO:0006959">
    <property type="term" value="P:humoral immune response"/>
    <property type="evidence" value="ECO:0000304"/>
    <property type="project" value="UniProtKB"/>
</dbReference>
<dbReference type="GO" id="GO:0043066">
    <property type="term" value="P:negative regulation of apoptotic process"/>
    <property type="evidence" value="ECO:0000304"/>
    <property type="project" value="UniProtKB"/>
</dbReference>
<dbReference type="GO" id="GO:0010629">
    <property type="term" value="P:negative regulation of gene expression"/>
    <property type="evidence" value="ECO:0000315"/>
    <property type="project" value="UniProtKB"/>
</dbReference>
<dbReference type="GO" id="GO:0045060">
    <property type="term" value="P:negative thymic T cell selection"/>
    <property type="evidence" value="ECO:0007669"/>
    <property type="project" value="Ensembl"/>
</dbReference>
<dbReference type="GO" id="GO:0043491">
    <property type="term" value="P:phosphatidylinositol 3-kinase/protein kinase B signal transduction"/>
    <property type="evidence" value="ECO:0007669"/>
    <property type="project" value="Ensembl"/>
</dbReference>
<dbReference type="GO" id="GO:2000563">
    <property type="term" value="P:positive regulation of CD4-positive, alpha-beta T cell proliferation"/>
    <property type="evidence" value="ECO:0007669"/>
    <property type="project" value="Ensembl"/>
</dbReference>
<dbReference type="GO" id="GO:0001819">
    <property type="term" value="P:positive regulation of cytokine production"/>
    <property type="evidence" value="ECO:0000304"/>
    <property type="project" value="UniProtKB"/>
</dbReference>
<dbReference type="GO" id="GO:0010628">
    <property type="term" value="P:positive regulation of gene expression"/>
    <property type="evidence" value="ECO:0000315"/>
    <property type="project" value="UniProtKB"/>
</dbReference>
<dbReference type="GO" id="GO:0002863">
    <property type="term" value="P:positive regulation of inflammatory response to antigenic stimulus"/>
    <property type="evidence" value="ECO:0007669"/>
    <property type="project" value="Ensembl"/>
</dbReference>
<dbReference type="GO" id="GO:0032733">
    <property type="term" value="P:positive regulation of interleukin-10 production"/>
    <property type="evidence" value="ECO:0000314"/>
    <property type="project" value="UniProtKB"/>
</dbReference>
<dbReference type="GO" id="GO:0032743">
    <property type="term" value="P:positive regulation of interleukin-2 production"/>
    <property type="evidence" value="ECO:0000314"/>
    <property type="project" value="UniProtKB"/>
</dbReference>
<dbReference type="GO" id="GO:0032753">
    <property type="term" value="P:positive regulation of interleukin-4 production"/>
    <property type="evidence" value="ECO:0000314"/>
    <property type="project" value="UniProtKB"/>
</dbReference>
<dbReference type="GO" id="GO:0048304">
    <property type="term" value="P:positive regulation of isotype switching to IgG isotypes"/>
    <property type="evidence" value="ECO:0007669"/>
    <property type="project" value="Ensembl"/>
</dbReference>
<dbReference type="GO" id="GO:0045840">
    <property type="term" value="P:positive regulation of mitotic nuclear division"/>
    <property type="evidence" value="ECO:0000314"/>
    <property type="project" value="UniProtKB"/>
</dbReference>
<dbReference type="GO" id="GO:0051897">
    <property type="term" value="P:positive regulation of phosphatidylinositol 3-kinase/protein kinase B signal transduction"/>
    <property type="evidence" value="ECO:0007669"/>
    <property type="project" value="Ensembl"/>
</dbReference>
<dbReference type="GO" id="GO:0042102">
    <property type="term" value="P:positive regulation of T cell proliferation"/>
    <property type="evidence" value="ECO:0000314"/>
    <property type="project" value="UniProtKB"/>
</dbReference>
<dbReference type="GO" id="GO:0045944">
    <property type="term" value="P:positive regulation of transcription by RNA polymerase II"/>
    <property type="evidence" value="ECO:0007669"/>
    <property type="project" value="Ensembl"/>
</dbReference>
<dbReference type="GO" id="GO:0045727">
    <property type="term" value="P:positive regulation of translation"/>
    <property type="evidence" value="ECO:0000303"/>
    <property type="project" value="UniProtKB"/>
</dbReference>
<dbReference type="GO" id="GO:0045070">
    <property type="term" value="P:positive regulation of viral genome replication"/>
    <property type="evidence" value="ECO:0000303"/>
    <property type="project" value="UniProtKB"/>
</dbReference>
<dbReference type="GO" id="GO:0045589">
    <property type="term" value="P:regulation of regulatory T cell differentiation"/>
    <property type="evidence" value="ECO:0007669"/>
    <property type="project" value="Ensembl"/>
</dbReference>
<dbReference type="GO" id="GO:0045066">
    <property type="term" value="P:regulatory T cell differentiation"/>
    <property type="evidence" value="ECO:0000314"/>
    <property type="project" value="BHF-UCL"/>
</dbReference>
<dbReference type="GO" id="GO:0042110">
    <property type="term" value="P:T cell activation"/>
    <property type="evidence" value="ECO:0000314"/>
    <property type="project" value="UniProt"/>
</dbReference>
<dbReference type="GO" id="GO:0031295">
    <property type="term" value="P:T cell costimulation"/>
    <property type="evidence" value="ECO:0000318"/>
    <property type="project" value="GO_Central"/>
</dbReference>
<dbReference type="GO" id="GO:0050852">
    <property type="term" value="P:T cell receptor signaling pathway"/>
    <property type="evidence" value="ECO:0000318"/>
    <property type="project" value="GO_Central"/>
</dbReference>
<dbReference type="GO" id="GO:0006366">
    <property type="term" value="P:transcription by RNA polymerase II"/>
    <property type="evidence" value="ECO:0007669"/>
    <property type="project" value="Ensembl"/>
</dbReference>
<dbReference type="CDD" id="cd20925">
    <property type="entry name" value="IgV_CD28"/>
    <property type="match status" value="1"/>
</dbReference>
<dbReference type="FunFam" id="2.60.40.10:FF:000716">
    <property type="entry name" value="T-cell-specific surface glycoprotein CD28"/>
    <property type="match status" value="1"/>
</dbReference>
<dbReference type="Gene3D" id="2.60.40.10">
    <property type="entry name" value="Immunoglobulins"/>
    <property type="match status" value="1"/>
</dbReference>
<dbReference type="IDEAL" id="IID00509"/>
<dbReference type="InterPro" id="IPR008093">
    <property type="entry name" value="CD28"/>
</dbReference>
<dbReference type="InterPro" id="IPR040216">
    <property type="entry name" value="CTLA4/CD28"/>
</dbReference>
<dbReference type="InterPro" id="IPR036179">
    <property type="entry name" value="Ig-like_dom_sf"/>
</dbReference>
<dbReference type="InterPro" id="IPR013783">
    <property type="entry name" value="Ig-like_fold"/>
</dbReference>
<dbReference type="InterPro" id="IPR013106">
    <property type="entry name" value="Ig_V-set"/>
</dbReference>
<dbReference type="PANTHER" id="PTHR11494">
    <property type="entry name" value="CYTOTOXIC T-LYMPHOCYTE PROTEIN"/>
    <property type="match status" value="1"/>
</dbReference>
<dbReference type="PANTHER" id="PTHR11494:SF7">
    <property type="entry name" value="T-CELL-SPECIFIC SURFACE GLYCOPROTEIN CD28"/>
    <property type="match status" value="1"/>
</dbReference>
<dbReference type="Pfam" id="PF15910">
    <property type="entry name" value="V-set_2"/>
    <property type="match status" value="1"/>
</dbReference>
<dbReference type="PRINTS" id="PR01717">
    <property type="entry name" value="CD28ANTIGEN"/>
</dbReference>
<dbReference type="SMART" id="SM00406">
    <property type="entry name" value="IGv"/>
    <property type="match status" value="1"/>
</dbReference>
<dbReference type="SUPFAM" id="SSF48726">
    <property type="entry name" value="Immunoglobulin"/>
    <property type="match status" value="1"/>
</dbReference>
<comment type="function">
    <text evidence="6 8 10 12 14 15">Receptor that plays a role in T-cell activation, proliferation, survival and the maintenance of immune homeostasis (PubMed:1650475, PubMed:7568038). Functions not only as an amplifier of TCR signals but delivers unique signals that control intracellular biochemical events that alter the gene expression program of T-cells (PubMed:24665965). Stimulation upon engagement of its cognate ligands CD80 or CD86 increases proliferation and expression of various cytokines in particular IL2 production in both CD4(+) and CD8(+) T-cell subsets (PubMed:1650475, PubMed:35397202). Mechanistically, ligation induces recruitment of protein kinase C-theta/PRKCQ and GRB2 leading to NF-kappa-B activation via both PI3K/Akt-dependent and -independent pathways (PubMed:21964608, PubMed:24665965, PubMed:7568038). In conjunction with TCR/CD3 ligation and CD40L costimulation, enhances the production of IL4 and IL10 in T-cells (PubMed:8617933).</text>
</comment>
<comment type="function">
    <molecule>Isoform 3</molecule>
    <text evidence="4">Enhances CD40L-mediated activation of NF-kappa-B and kinases MAPK8 and PAK2 in T-cells (PubMed:15067037).</text>
</comment>
<comment type="subunit">
    <text evidence="3 5 8 9 12 14">Homodimer; disulfide-linked (PubMed:35397202). Interacts with DUSP14. Binds to CD80/B7-1 and CD86/B7-2/B70 (PubMed:12196291). Interacts with GRB2 (PubMed:24098653, PubMed:7568038). Interacts with PIK3R1 (PubMed:7568038). Interacts with PRKCQ (PubMed:21964608).</text>
</comment>
<comment type="subunit">
    <molecule>Isoform 3</molecule>
    <text evidence="4">Interacts with CD40LG.</text>
</comment>
<comment type="interaction">
    <interactant intactId="EBI-4314301">
        <id>P10747</id>
    </interactant>
    <interactant intactId="EBI-79464">
        <id>P27986</id>
        <label>PIK3R1</label>
    </interactant>
    <organismsDiffer>false</organismsDiffer>
    <experiments>10</experiments>
</comment>
<comment type="interaction">
    <interactant intactId="EBI-15945088">
        <id>P10747-1</id>
    </interactant>
    <interactant intactId="EBI-1027464">
        <id>P01552</id>
        <label>entB</label>
    </interactant>
    <organismsDiffer>true</organismsDiffer>
    <experiments>5</experiments>
</comment>
<comment type="subcellular location">
    <subcellularLocation>
        <location evidence="12">Cell membrane</location>
        <topology>Single-pass type I membrane protein</topology>
    </subcellularLocation>
</comment>
<comment type="subcellular location">
    <molecule>Isoform 3</molecule>
    <subcellularLocation>
        <location evidence="4">Cell surface</location>
    </subcellularLocation>
</comment>
<comment type="alternative products">
    <event type="alternative splicing"/>
    <isoform>
        <id>P10747-1</id>
        <name>1</name>
        <sequence type="displayed"/>
    </isoform>
    <isoform>
        <id>P10747-2</id>
        <name>2</name>
        <name>CD28-S2</name>
        <sequence type="described" ref="VSP_002494"/>
    </isoform>
    <isoform>
        <id>P10747-3</id>
        <name>3</name>
        <name>CD28i</name>
        <sequence type="described" ref="VSP_002495"/>
    </isoform>
    <isoform>
        <id>P10747-4</id>
        <name>4</name>
        <name>CD28-S1</name>
        <sequence type="described" ref="VSP_002496"/>
    </isoform>
    <isoform>
        <id>P10747-5</id>
        <name>5</name>
        <sequence type="described" ref="VSP_002495 VSP_002497 VSP_002498"/>
    </isoform>
    <isoform>
        <id>P10747-6</id>
        <name>6</name>
        <name>CD28-S3</name>
        <sequence type="described" ref="VSP_002495 VSP_002499"/>
    </isoform>
    <isoform>
        <id>P10747-7</id>
        <name>7</name>
        <sequence type="described" ref="VSP_047701"/>
    </isoform>
</comment>
<comment type="tissue specificity">
    <text>Expressed in T-cells and plasma cells, but not in less mature B-cells.</text>
</comment>
<comment type="PTM">
    <text evidence="13 14">Phosphorylated by LCK (PubMed:7568038). Dephosphorylated by PTPN11 (PubMed:36114179).</text>
</comment>
<comment type="PTM">
    <molecule>Isoform 3</molecule>
    <text evidence="4">Tyrosine phosphorylated induced by CD40LG.</text>
</comment>
<comment type="disease" evidence="11">
    <disease id="DI-06931">
        <name>Immunodeficiency 123 with HPV-related verrucosis</name>
        <acronym>IMD123</acronym>
        <description>An autosomal recessive immunologic disorder characterized by susceptibility to human papilloma virus (HPV) infections and the development of HPV-related common verrucosis in the first decade of life. In some patients with HPV2 infection, warts may progress to severe generalized hyperkeratotic cutaneous papillomatosis with cutaneous horns ('tree-man' phenotype). In patients with HPV4 infection, warts remains stable and may even regress with age.</description>
        <dbReference type="MIM" id="620901"/>
    </disease>
    <text>The disease may be caused by variants affecting the gene represented in this entry.</text>
</comment>
<comment type="online information" name="Wikipedia">
    <link uri="https://en.wikipedia.org/wiki/CD28"/>
    <text>CD28 entry</text>
</comment>
<evidence type="ECO:0000255" key="1"/>
<evidence type="ECO:0000256" key="2">
    <source>
        <dbReference type="SAM" id="MobiDB-lite"/>
    </source>
</evidence>
<evidence type="ECO:0000269" key="3">
    <source>
    </source>
</evidence>
<evidence type="ECO:0000269" key="4">
    <source>
    </source>
</evidence>
<evidence type="ECO:0000269" key="5">
    <source>
    </source>
</evidence>
<evidence type="ECO:0000269" key="6">
    <source>
    </source>
</evidence>
<evidence type="ECO:0000269" key="7">
    <source>
    </source>
</evidence>
<evidence type="ECO:0000269" key="8">
    <source>
    </source>
</evidence>
<evidence type="ECO:0000269" key="9">
    <source>
    </source>
</evidence>
<evidence type="ECO:0000269" key="10">
    <source>
    </source>
</evidence>
<evidence type="ECO:0000269" key="11">
    <source>
    </source>
</evidence>
<evidence type="ECO:0000269" key="12">
    <source>
    </source>
</evidence>
<evidence type="ECO:0000269" key="13">
    <source>
    </source>
</evidence>
<evidence type="ECO:0000269" key="14">
    <source>
    </source>
</evidence>
<evidence type="ECO:0000269" key="15">
    <source>
    </source>
</evidence>
<evidence type="ECO:0000303" key="16">
    <source>
    </source>
</evidence>
<evidence type="ECO:0000303" key="17">
    <source>
    </source>
</evidence>
<evidence type="ECO:0000303" key="18">
    <source ref="5"/>
</evidence>
<evidence type="ECO:0007744" key="19">
    <source>
        <dbReference type="PDB" id="7PPN"/>
    </source>
</evidence>
<evidence type="ECO:0007744" key="20">
    <source>
        <dbReference type="PDB" id="7VU5"/>
    </source>
</evidence>
<evidence type="ECO:0007744" key="21">
    <source>
    </source>
</evidence>
<evidence type="ECO:0007744" key="22">
    <source>
    </source>
</evidence>
<evidence type="ECO:0007829" key="23">
    <source>
        <dbReference type="PDB" id="1YJD"/>
    </source>
</evidence>
<evidence type="ECO:0007829" key="24">
    <source>
        <dbReference type="PDB" id="7VU5"/>
    </source>
</evidence>
<feature type="signal peptide">
    <location>
        <begin position="1"/>
        <end position="18"/>
    </location>
</feature>
<feature type="chain" id="PRO_0000014652" description="T-cell-specific surface glycoprotein CD28">
    <location>
        <begin position="19"/>
        <end position="220"/>
    </location>
</feature>
<feature type="topological domain" description="Extracellular" evidence="1">
    <location>
        <begin position="19"/>
        <end position="152"/>
    </location>
</feature>
<feature type="transmembrane region" description="Helical" evidence="1">
    <location>
        <begin position="153"/>
        <end position="179"/>
    </location>
</feature>
<feature type="topological domain" description="Cytoplasmic" evidence="1">
    <location>
        <begin position="180"/>
        <end position="220"/>
    </location>
</feature>
<feature type="domain" description="Ig-like V-type">
    <location>
        <begin position="28"/>
        <end position="137"/>
    </location>
</feature>
<feature type="region of interest" description="Disordered" evidence="2">
    <location>
        <begin position="198"/>
        <end position="220"/>
    </location>
</feature>
<feature type="modified residue" description="Phosphoserine" evidence="22">
    <location>
        <position position="189"/>
    </location>
</feature>
<feature type="modified residue" description="Phosphotyrosine; by LCK" evidence="14 22">
    <location>
        <position position="191"/>
    </location>
</feature>
<feature type="modified residue" description="Phosphotyrosine" evidence="21">
    <location>
        <position position="209"/>
    </location>
</feature>
<feature type="glycosylation site" description="N-linked (GlcNAc...) asparagine" evidence="5">
    <location>
        <position position="37"/>
    </location>
</feature>
<feature type="glycosylation site" description="N-linked (GlcNAc...) asparagine" evidence="7">
    <location>
        <position position="71"/>
    </location>
</feature>
<feature type="glycosylation site" description="N-linked (GlcNAc...) asparagine" evidence="1">
    <location>
        <position position="92"/>
    </location>
</feature>
<feature type="glycosylation site" description="N-linked (GlcNAc...) asparagine" evidence="5">
    <location>
        <position position="105"/>
    </location>
</feature>
<feature type="glycosylation site" description="N-linked (GlcNAc...) asparagine" evidence="7">
    <location>
        <position position="129"/>
    </location>
</feature>
<feature type="disulfide bond" evidence="5">
    <location>
        <begin position="40"/>
        <end position="112"/>
    </location>
</feature>
<feature type="disulfide bond" evidence="5">
    <location>
        <begin position="66"/>
        <end position="86"/>
    </location>
</feature>
<feature type="splice variant" id="VSP_047701" description="In isoform 7." evidence="18">
    <original>MLRLLLALNLFPSIQVT</original>
    <variation>MPCGLSALIMCPKGMVAVVVAVDDGDSQALA</variation>
    <location>
        <begin position="1"/>
        <end position="17"/>
    </location>
</feature>
<feature type="splice variant" id="VSP_002494" description="In isoform 2." evidence="16">
    <location>
        <begin position="19"/>
        <end position="137"/>
    </location>
</feature>
<feature type="splice variant" id="VSP_002496" description="In isoform 4." evidence="16">
    <original>CKYSYNLFSREFRASLHKGLDSAVEVCVVYGNYSQQLQVYSKTGFNCDGKLGNESVTFYLQNLYVNQTDIYFCKIEVMYPPPYLDNEKSNGTIIHVKG</original>
    <variation>W</variation>
    <location>
        <begin position="40"/>
        <end position="137"/>
    </location>
</feature>
<feature type="splice variant" id="VSP_002495" description="In isoform 3, isoform 5 and isoform 6." evidence="16 17">
    <original>CKYSYNLFSREFRASLHKGLDSAVEVCVVYGNYSQQLQVYSKTGFNCDGKLGNESVTFYLQNLYVNQTDIYFCKIEVMYPPPYLD</original>
    <variation>Y</variation>
    <location>
        <begin position="40"/>
        <end position="124"/>
    </location>
</feature>
<feature type="splice variant" id="VSP_002497" description="In isoform 5." evidence="17">
    <original>KH</original>
    <variation>EE</variation>
    <location>
        <begin position="138"/>
        <end position="139"/>
    </location>
</feature>
<feature type="splice variant" id="VSP_002498" description="In isoform 5." evidence="17">
    <location>
        <begin position="140"/>
        <end position="220"/>
    </location>
</feature>
<feature type="splice variant" id="VSP_002499" description="In isoform 6." evidence="16">
    <location>
        <begin position="152"/>
        <end position="207"/>
    </location>
</feature>
<feature type="sequence variant" id="VAR_089967" description="In IMD123; likely pathogenic; the underlying nucleotide substitution affects splicing; patient-derived cells contain normally spliced transcripts with the missense variant and aberrant splice transcripts that probably undergo nonsense-mediated decay; significantly decreased CD28 mRNA levels in homozygous patient-derived T cells compared to controls; decreased function in T cell activation." evidence="11">
    <original>G</original>
    <variation>R</variation>
    <location>
        <position position="18"/>
    </location>
</feature>
<feature type="mutagenesis site" description="About 75% loss of IL2 release." evidence="12">
    <original>G</original>
    <variation>Y</variation>
    <location>
        <position position="160"/>
    </location>
</feature>
<feature type="mutagenesis site" description="About 75% loss of IL2 release." evidence="12">
    <original>A</original>
    <variation>L</variation>
    <location>
        <position position="164"/>
    </location>
</feature>
<feature type="mutagenesis site" description="Greatly reduced phosphorylation by LCK." evidence="14">
    <original>Y</original>
    <variation>F</variation>
    <location>
        <position position="191"/>
    </location>
</feature>
<feature type="strand" evidence="23">
    <location>
        <begin position="27"/>
        <end position="30"/>
    </location>
</feature>
<feature type="strand" evidence="23">
    <location>
        <begin position="35"/>
        <end position="43"/>
    </location>
</feature>
<feature type="strand" evidence="23">
    <location>
        <begin position="49"/>
        <end position="58"/>
    </location>
</feature>
<feature type="strand" evidence="23">
    <location>
        <begin position="64"/>
        <end position="74"/>
    </location>
</feature>
<feature type="strand" evidence="23">
    <location>
        <begin position="77"/>
        <end position="79"/>
    </location>
</feature>
<feature type="strand" evidence="23">
    <location>
        <begin position="81"/>
        <end position="83"/>
    </location>
</feature>
<feature type="strand" evidence="23">
    <location>
        <begin position="85"/>
        <end position="90"/>
    </location>
</feature>
<feature type="strand" evidence="23">
    <location>
        <begin position="92"/>
        <end position="101"/>
    </location>
</feature>
<feature type="helix" evidence="23">
    <location>
        <begin position="104"/>
        <end position="106"/>
    </location>
</feature>
<feature type="strand" evidence="23">
    <location>
        <begin position="108"/>
        <end position="121"/>
    </location>
</feature>
<feature type="strand" evidence="23">
    <location>
        <begin position="123"/>
        <end position="125"/>
    </location>
</feature>
<feature type="strand" evidence="23">
    <location>
        <begin position="131"/>
        <end position="134"/>
    </location>
</feature>
<feature type="helix" evidence="24">
    <location>
        <begin position="153"/>
        <end position="182"/>
    </location>
</feature>
<name>CD28_HUMAN</name>
<gene>
    <name type="primary">CD28</name>
</gene>
<reference key="1">
    <citation type="journal article" date="1987" name="Proc. Natl. Acad. Sci. U.S.A.">
        <title>Molecular cloning of a CD28 cDNA by a high-efficiency COS cell expression system.</title>
        <authorList>
            <person name="Aruffo A."/>
            <person name="Seed B."/>
        </authorList>
    </citation>
    <scope>NUCLEOTIDE SEQUENCE [MRNA] (ISOFORM 1)</scope>
</reference>
<reference key="2">
    <citation type="journal article" date="1990" name="J. Immunol.">
        <title>The genomic organization of the CD28 gene. Implications for the regulation of CD28 mRNA expression and heterogeneity.</title>
        <authorList>
            <person name="Lee K.P."/>
            <person name="Taylor C."/>
            <person name="Petryniak B."/>
            <person name="Turka L.A."/>
            <person name="June C.H."/>
            <person name="Thompson C.B."/>
        </authorList>
    </citation>
    <scope>NUCLEOTIDE SEQUENCE [GENOMIC DNA] (ISOFORMS 1 AND 3)</scope>
    <scope>ALTERNATIVE SPLICING</scope>
</reference>
<reference key="3">
    <citation type="journal article" date="2002" name="Hum. Immunol.">
        <title>A novel CD28 mRNA variant and simultaneous presence of various CD28 mRNA isoforms in human T lymphocytes.</title>
        <authorList>
            <person name="Deshpande M."/>
            <person name="Venuprasad K."/>
            <person name="Parab P.B."/>
            <person name="Saha B."/>
            <person name="Mitra D."/>
        </authorList>
    </citation>
    <scope>NUCLEOTIDE SEQUENCE [MRNA] (ISOFORM 5)</scope>
</reference>
<reference key="4">
    <citation type="journal article" date="2002" name="Blood">
        <title>A novel costimulatory signaling in human T lymphocytes by a splice variant of CD28.</title>
        <authorList>
            <person name="Hanawa H."/>
            <person name="Ma Y."/>
            <person name="Mikolajczak S.A."/>
            <person name="Charles M.L."/>
            <person name="Yoshida T."/>
            <person name="Yoshida R."/>
            <person name="Strathdee C.A."/>
            <person name="Litchfield D.W."/>
            <person name="Ochi A."/>
        </authorList>
    </citation>
    <scope>NUCLEOTIDE SEQUENCE [MRNA] (ISOFORMS 2; 4 AND 6)</scope>
    <scope>CHARACTERIZATION (ISOFORM 3)</scope>
    <source>
        <tissue>Peripheral blood T-cell</tissue>
    </source>
</reference>
<reference key="5">
    <citation type="submission" date="2002-11" db="EMBL/GenBank/DDBJ databases">
        <title>New human CD28 isoforms generated by a novel splicing event in the 5'UTR.</title>
        <authorList>
            <person name="Gan S.U."/>
            <person name="Hare J."/>
            <person name="Krivoshchapov L."/>
            <person name="Hui K.M."/>
            <person name="Galea-Lauri J."/>
            <person name="Farzaneh F."/>
            <person name="Darling D."/>
        </authorList>
    </citation>
    <scope>NUCLEOTIDE SEQUENCE [MRNA] (ISOFORM 7)</scope>
</reference>
<reference key="6">
    <citation type="submission" date="2006-10" db="EMBL/GenBank/DDBJ databases">
        <authorList>
            <person name="Livingston R.J."/>
            <person name="Shaffer T."/>
            <person name="McFarland I."/>
            <person name="Nguyen C.P."/>
            <person name="Stanaway I.B."/>
            <person name="Rajkumar N."/>
            <person name="Johnson E.J."/>
            <person name="da Ponte S.H."/>
            <person name="Willa H."/>
            <person name="Ahearn M.O."/>
            <person name="Bertucci C."/>
            <person name="Acklestad J."/>
            <person name="Carroll A."/>
            <person name="Swanson J."/>
            <person name="Gildersleeve H.I."/>
            <person name="Nickerson D.A."/>
        </authorList>
    </citation>
    <scope>NUCLEOTIDE SEQUENCE [GENOMIC DNA]</scope>
</reference>
<reference key="7">
    <citation type="journal article" date="2004" name="Nat. Genet.">
        <title>Complete sequencing and characterization of 21,243 full-length human cDNAs.</title>
        <authorList>
            <person name="Ota T."/>
            <person name="Suzuki Y."/>
            <person name="Nishikawa T."/>
            <person name="Otsuki T."/>
            <person name="Sugiyama T."/>
            <person name="Irie R."/>
            <person name="Wakamatsu A."/>
            <person name="Hayashi K."/>
            <person name="Sato H."/>
            <person name="Nagai K."/>
            <person name="Kimura K."/>
            <person name="Makita H."/>
            <person name="Sekine M."/>
            <person name="Obayashi M."/>
            <person name="Nishi T."/>
            <person name="Shibahara T."/>
            <person name="Tanaka T."/>
            <person name="Ishii S."/>
            <person name="Yamamoto J."/>
            <person name="Saito K."/>
            <person name="Kawai Y."/>
            <person name="Isono Y."/>
            <person name="Nakamura Y."/>
            <person name="Nagahari K."/>
            <person name="Murakami K."/>
            <person name="Yasuda T."/>
            <person name="Iwayanagi T."/>
            <person name="Wagatsuma M."/>
            <person name="Shiratori A."/>
            <person name="Sudo H."/>
            <person name="Hosoiri T."/>
            <person name="Kaku Y."/>
            <person name="Kodaira H."/>
            <person name="Kondo H."/>
            <person name="Sugawara M."/>
            <person name="Takahashi M."/>
            <person name="Kanda K."/>
            <person name="Yokoi T."/>
            <person name="Furuya T."/>
            <person name="Kikkawa E."/>
            <person name="Omura Y."/>
            <person name="Abe K."/>
            <person name="Kamihara K."/>
            <person name="Katsuta N."/>
            <person name="Sato K."/>
            <person name="Tanikawa M."/>
            <person name="Yamazaki M."/>
            <person name="Ninomiya K."/>
            <person name="Ishibashi T."/>
            <person name="Yamashita H."/>
            <person name="Murakawa K."/>
            <person name="Fujimori K."/>
            <person name="Tanai H."/>
            <person name="Kimata M."/>
            <person name="Watanabe M."/>
            <person name="Hiraoka S."/>
            <person name="Chiba Y."/>
            <person name="Ishida S."/>
            <person name="Ono Y."/>
            <person name="Takiguchi S."/>
            <person name="Watanabe S."/>
            <person name="Yosida M."/>
            <person name="Hotuta T."/>
            <person name="Kusano J."/>
            <person name="Kanehori K."/>
            <person name="Takahashi-Fujii A."/>
            <person name="Hara H."/>
            <person name="Tanase T.-O."/>
            <person name="Nomura Y."/>
            <person name="Togiya S."/>
            <person name="Komai F."/>
            <person name="Hara R."/>
            <person name="Takeuchi K."/>
            <person name="Arita M."/>
            <person name="Imose N."/>
            <person name="Musashino K."/>
            <person name="Yuuki H."/>
            <person name="Oshima A."/>
            <person name="Sasaki N."/>
            <person name="Aotsuka S."/>
            <person name="Yoshikawa Y."/>
            <person name="Matsunawa H."/>
            <person name="Ichihara T."/>
            <person name="Shiohata N."/>
            <person name="Sano S."/>
            <person name="Moriya S."/>
            <person name="Momiyama H."/>
            <person name="Satoh N."/>
            <person name="Takami S."/>
            <person name="Terashima Y."/>
            <person name="Suzuki O."/>
            <person name="Nakagawa S."/>
            <person name="Senoh A."/>
            <person name="Mizoguchi H."/>
            <person name="Goto Y."/>
            <person name="Shimizu F."/>
            <person name="Wakebe H."/>
            <person name="Hishigaki H."/>
            <person name="Watanabe T."/>
            <person name="Sugiyama A."/>
            <person name="Takemoto M."/>
            <person name="Kawakami B."/>
            <person name="Yamazaki M."/>
            <person name="Watanabe K."/>
            <person name="Kumagai A."/>
            <person name="Itakura S."/>
            <person name="Fukuzumi Y."/>
            <person name="Fujimori Y."/>
            <person name="Komiyama M."/>
            <person name="Tashiro H."/>
            <person name="Tanigami A."/>
            <person name="Fujiwara T."/>
            <person name="Ono T."/>
            <person name="Yamada K."/>
            <person name="Fujii Y."/>
            <person name="Ozaki K."/>
            <person name="Hirao M."/>
            <person name="Ohmori Y."/>
            <person name="Kawabata A."/>
            <person name="Hikiji T."/>
            <person name="Kobatake N."/>
            <person name="Inagaki H."/>
            <person name="Ikema Y."/>
            <person name="Okamoto S."/>
            <person name="Okitani R."/>
            <person name="Kawakami T."/>
            <person name="Noguchi S."/>
            <person name="Itoh T."/>
            <person name="Shigeta K."/>
            <person name="Senba T."/>
            <person name="Matsumura K."/>
            <person name="Nakajima Y."/>
            <person name="Mizuno T."/>
            <person name="Morinaga M."/>
            <person name="Sasaki M."/>
            <person name="Togashi T."/>
            <person name="Oyama M."/>
            <person name="Hata H."/>
            <person name="Watanabe M."/>
            <person name="Komatsu T."/>
            <person name="Mizushima-Sugano J."/>
            <person name="Satoh T."/>
            <person name="Shirai Y."/>
            <person name="Takahashi Y."/>
            <person name="Nakagawa K."/>
            <person name="Okumura K."/>
            <person name="Nagase T."/>
            <person name="Nomura N."/>
            <person name="Kikuchi H."/>
            <person name="Masuho Y."/>
            <person name="Yamashita R."/>
            <person name="Nakai K."/>
            <person name="Yada T."/>
            <person name="Nakamura Y."/>
            <person name="Ohara O."/>
            <person name="Isogai T."/>
            <person name="Sugano S."/>
        </authorList>
    </citation>
    <scope>NUCLEOTIDE SEQUENCE [LARGE SCALE MRNA] (ISOFORM 1)</scope>
    <source>
        <tissue>Synovium</tissue>
        <tissue>Trachea</tissue>
    </source>
</reference>
<reference key="8">
    <citation type="journal article" date="2005" name="Nature">
        <title>Generation and annotation of the DNA sequences of human chromosomes 2 and 4.</title>
        <authorList>
            <person name="Hillier L.W."/>
            <person name="Graves T.A."/>
            <person name="Fulton R.S."/>
            <person name="Fulton L.A."/>
            <person name="Pepin K.H."/>
            <person name="Minx P."/>
            <person name="Wagner-McPherson C."/>
            <person name="Layman D."/>
            <person name="Wylie K."/>
            <person name="Sekhon M."/>
            <person name="Becker M.C."/>
            <person name="Fewell G.A."/>
            <person name="Delehaunty K.D."/>
            <person name="Miner T.L."/>
            <person name="Nash W.E."/>
            <person name="Kremitzki C."/>
            <person name="Oddy L."/>
            <person name="Du H."/>
            <person name="Sun H."/>
            <person name="Bradshaw-Cordum H."/>
            <person name="Ali J."/>
            <person name="Carter J."/>
            <person name="Cordes M."/>
            <person name="Harris A."/>
            <person name="Isak A."/>
            <person name="van Brunt A."/>
            <person name="Nguyen C."/>
            <person name="Du F."/>
            <person name="Courtney L."/>
            <person name="Kalicki J."/>
            <person name="Ozersky P."/>
            <person name="Abbott S."/>
            <person name="Armstrong J."/>
            <person name="Belter E.A."/>
            <person name="Caruso L."/>
            <person name="Cedroni M."/>
            <person name="Cotton M."/>
            <person name="Davidson T."/>
            <person name="Desai A."/>
            <person name="Elliott G."/>
            <person name="Erb T."/>
            <person name="Fronick C."/>
            <person name="Gaige T."/>
            <person name="Haakenson W."/>
            <person name="Haglund K."/>
            <person name="Holmes A."/>
            <person name="Harkins R."/>
            <person name="Kim K."/>
            <person name="Kruchowski S.S."/>
            <person name="Strong C.M."/>
            <person name="Grewal N."/>
            <person name="Goyea E."/>
            <person name="Hou S."/>
            <person name="Levy A."/>
            <person name="Martinka S."/>
            <person name="Mead K."/>
            <person name="McLellan M.D."/>
            <person name="Meyer R."/>
            <person name="Randall-Maher J."/>
            <person name="Tomlinson C."/>
            <person name="Dauphin-Kohlberg S."/>
            <person name="Kozlowicz-Reilly A."/>
            <person name="Shah N."/>
            <person name="Swearengen-Shahid S."/>
            <person name="Snider J."/>
            <person name="Strong J.T."/>
            <person name="Thompson J."/>
            <person name="Yoakum M."/>
            <person name="Leonard S."/>
            <person name="Pearman C."/>
            <person name="Trani L."/>
            <person name="Radionenko M."/>
            <person name="Waligorski J.E."/>
            <person name="Wang C."/>
            <person name="Rock S.M."/>
            <person name="Tin-Wollam A.-M."/>
            <person name="Maupin R."/>
            <person name="Latreille P."/>
            <person name="Wendl M.C."/>
            <person name="Yang S.-P."/>
            <person name="Pohl C."/>
            <person name="Wallis J.W."/>
            <person name="Spieth J."/>
            <person name="Bieri T.A."/>
            <person name="Berkowicz N."/>
            <person name="Nelson J.O."/>
            <person name="Osborne J."/>
            <person name="Ding L."/>
            <person name="Meyer R."/>
            <person name="Sabo A."/>
            <person name="Shotland Y."/>
            <person name="Sinha P."/>
            <person name="Wohldmann P.E."/>
            <person name="Cook L.L."/>
            <person name="Hickenbotham M.T."/>
            <person name="Eldred J."/>
            <person name="Williams D."/>
            <person name="Jones T.A."/>
            <person name="She X."/>
            <person name="Ciccarelli F.D."/>
            <person name="Izaurralde E."/>
            <person name="Taylor J."/>
            <person name="Schmutz J."/>
            <person name="Myers R.M."/>
            <person name="Cox D.R."/>
            <person name="Huang X."/>
            <person name="McPherson J.D."/>
            <person name="Mardis E.R."/>
            <person name="Clifton S.W."/>
            <person name="Warren W.C."/>
            <person name="Chinwalla A.T."/>
            <person name="Eddy S.R."/>
            <person name="Marra M.A."/>
            <person name="Ovcharenko I."/>
            <person name="Furey T.S."/>
            <person name="Miller W."/>
            <person name="Eichler E.E."/>
            <person name="Bork P."/>
            <person name="Suyama M."/>
            <person name="Torrents D."/>
            <person name="Waterston R.H."/>
            <person name="Wilson R.K."/>
        </authorList>
    </citation>
    <scope>NUCLEOTIDE SEQUENCE [LARGE SCALE GENOMIC DNA]</scope>
</reference>
<reference key="9">
    <citation type="submission" date="2005-07" db="EMBL/GenBank/DDBJ databases">
        <authorList>
            <person name="Mural R.J."/>
            <person name="Istrail S."/>
            <person name="Sutton G."/>
            <person name="Florea L."/>
            <person name="Halpern A.L."/>
            <person name="Mobarry C.M."/>
            <person name="Lippert R."/>
            <person name="Walenz B."/>
            <person name="Shatkay H."/>
            <person name="Dew I."/>
            <person name="Miller J.R."/>
            <person name="Flanigan M.J."/>
            <person name="Edwards N.J."/>
            <person name="Bolanos R."/>
            <person name="Fasulo D."/>
            <person name="Halldorsson B.V."/>
            <person name="Hannenhalli S."/>
            <person name="Turner R."/>
            <person name="Yooseph S."/>
            <person name="Lu F."/>
            <person name="Nusskern D.R."/>
            <person name="Shue B.C."/>
            <person name="Zheng X.H."/>
            <person name="Zhong F."/>
            <person name="Delcher A.L."/>
            <person name="Huson D.H."/>
            <person name="Kravitz S.A."/>
            <person name="Mouchard L."/>
            <person name="Reinert K."/>
            <person name="Remington K.A."/>
            <person name="Clark A.G."/>
            <person name="Waterman M.S."/>
            <person name="Eichler E.E."/>
            <person name="Adams M.D."/>
            <person name="Hunkapiller M.W."/>
            <person name="Myers E.W."/>
            <person name="Venter J.C."/>
        </authorList>
    </citation>
    <scope>NUCLEOTIDE SEQUENCE [LARGE SCALE GENOMIC DNA]</scope>
</reference>
<reference key="10">
    <citation type="journal article" date="2004" name="Genome Res.">
        <title>The status, quality, and expansion of the NIH full-length cDNA project: the Mammalian Gene Collection (MGC).</title>
        <authorList>
            <consortium name="The MGC Project Team"/>
        </authorList>
    </citation>
    <scope>NUCLEOTIDE SEQUENCE [LARGE SCALE MRNA]</scope>
</reference>
<reference key="11">
    <citation type="journal article" date="2001" name="Genomics">
        <title>Assembly and annotation of human chromosome 2q33 sequence containing the CD28, CTLA4, and ICOS gene cluster: analysis by computational, comparative, and microarray approaches.</title>
        <authorList>
            <person name="Ling V."/>
            <person name="Wu P.W."/>
            <person name="Finnerty H.F."/>
            <person name="Agostino M.J."/>
            <person name="Graham J.R."/>
            <person name="Chen S."/>
            <person name="Jussiff J.M."/>
            <person name="Fisk G.J."/>
            <person name="Miller C.P."/>
            <person name="Collins M."/>
        </authorList>
    </citation>
    <scope>NUCLEOTIDE SEQUENCE [GENOMIC DNA] OF 1-178 (ISOFORM 1)</scope>
</reference>
<reference key="12">
    <citation type="journal article" date="1991" name="Proc. Natl. Acad. Sci. U.S.A.">
        <title>B-cell surface antigen B7 provides a costimulatory signal that induces T cells to proliferate and secrete interleukin 2.</title>
        <authorList>
            <person name="Gimmi C.D."/>
            <person name="Freeman G.J."/>
            <person name="Gribben J.G."/>
            <person name="Sugita K."/>
            <person name="Freedman A.S."/>
            <person name="Morimoto C."/>
            <person name="Nadler L.M."/>
        </authorList>
    </citation>
    <scope>FUNCTION</scope>
</reference>
<reference key="13">
    <citation type="journal article" date="1995" name="Proc. Natl. Acad. Sci. U.S.A.">
        <title>p56Lck and p59Fyn regulate CD28 binding to phosphatidylinositol 3-kinase, growth factor receptor-bound protein GRB-2, and T cell-specific protein-tyrosine kinase ITK: implications for T-cell costimulation.</title>
        <authorList>
            <person name="Raab M."/>
            <person name="Cai Y.C."/>
            <person name="Bunnell S.C."/>
            <person name="Heyeck S.D."/>
            <person name="Berg L.J."/>
            <person name="Rudd C.E."/>
        </authorList>
    </citation>
    <scope>FUNCTION</scope>
    <scope>PHOSPHORYLATION AT TYR-191</scope>
    <scope>INTERACTION WITH GRB2 AND PIK3R1</scope>
    <scope>MUTAGENESIS OF TYR-191</scope>
</reference>
<reference key="14">
    <citation type="journal article" date="1996" name="J. Immunol.">
        <title>Cross-linking of the CD40 ligand on human CD4+ T lymphocytes generates a costimulatory signal that up-regulates IL-4 synthesis.</title>
        <authorList>
            <person name="Blotta M.H."/>
            <person name="Marshall J.D."/>
            <person name="DeKruyff R.H."/>
            <person name="Umetsu D.T."/>
        </authorList>
    </citation>
    <scope>FUNCTION</scope>
</reference>
<reference key="15">
    <citation type="journal article" date="2002" name="Immunity">
        <title>The interaction properties of costimulatory molecules revisited.</title>
        <authorList>
            <person name="Collins A.V."/>
            <person name="Brodie D.W."/>
            <person name="Gilbert R.J."/>
            <person name="Iaboni A."/>
            <person name="Manso-Sancho R."/>
            <person name="Walse B."/>
            <person name="Stuart D.I."/>
            <person name="van der Merwe P.A."/>
            <person name="Davis S.J."/>
        </authorList>
    </citation>
    <scope>INTERACTION WITH CD80 AND CD86</scope>
</reference>
<reference key="16">
    <citation type="journal article" date="2004" name="Anal. Chem.">
        <title>Robust phosphoproteomic profiling of tyrosine phosphorylation sites from human T cells using immobilized metal affinity chromatography and tandem mass spectrometry.</title>
        <authorList>
            <person name="Brill L.M."/>
            <person name="Salomon A.R."/>
            <person name="Ficarro S.B."/>
            <person name="Mukherji M."/>
            <person name="Stettler-Gill M."/>
            <person name="Peters E.C."/>
        </authorList>
    </citation>
    <scope>PHOSPHORYLATION [LARGE SCALE ANALYSIS] AT TYR-209</scope>
    <scope>IDENTIFICATION BY MASS SPECTROMETRY [LARGE SCALE ANALYSIS]</scope>
    <source>
        <tissue>Leukemic T-cell</tissue>
    </source>
</reference>
<reference key="17">
    <citation type="journal article" date="2004" name="J. Exp. Med.">
        <title>The modulation of CD40 ligand signaling by transmembrane CD28 splice variant in human T cells.</title>
        <authorList>
            <person name="Mikolajczak S.A."/>
            <person name="Ma B.Y."/>
            <person name="Yoshida T."/>
            <person name="Yoshida R."/>
            <person name="Kelvin D.J."/>
            <person name="Ochi A."/>
        </authorList>
    </citation>
    <scope>FUNCTION (ISOFORM 3)</scope>
    <scope>SUBCELLULAR LOCATION (ISOFORM 3)</scope>
    <scope>INTERACTION WITH CD40LG (ISOFORM 3)</scope>
    <scope>PHOSPHORYLATION (ISOFORM 3)</scope>
</reference>
<reference key="18">
    <citation type="journal article" date="2009" name="Nat. Biotechnol.">
        <title>Mass-spectrometric identification and relative quantification of N-linked cell surface glycoproteins.</title>
        <authorList>
            <person name="Wollscheid B."/>
            <person name="Bausch-Fluck D."/>
            <person name="Henderson C."/>
            <person name="O'Brien R."/>
            <person name="Bibel M."/>
            <person name="Schiess R."/>
            <person name="Aebersold R."/>
            <person name="Watts J.D."/>
        </authorList>
    </citation>
    <scope>GLYCOSYLATION [LARGE SCALE ANALYSIS] AT ASN-71 AND ASN-129</scope>
    <source>
        <tissue>Leukemic T-cell</tissue>
    </source>
</reference>
<reference key="19">
    <citation type="journal article" date="2009" name="Sci. Signal.">
        <title>Quantitative phosphoproteomic analysis of T cell receptor signaling reveals system-wide modulation of protein-protein interactions.</title>
        <authorList>
            <person name="Mayya V."/>
            <person name="Lundgren D.H."/>
            <person name="Hwang S.-I."/>
            <person name="Rezaul K."/>
            <person name="Wu L."/>
            <person name="Eng J.K."/>
            <person name="Rodionov V."/>
            <person name="Han D.K."/>
        </authorList>
    </citation>
    <scope>PHOSPHORYLATION [LARGE SCALE ANALYSIS] AT SER-189 AND TYR-191</scope>
    <scope>IDENTIFICATION BY MASS SPECTROMETRY [LARGE SCALE ANALYSIS]</scope>
    <source>
        <tissue>Leukemic T-cell</tissue>
    </source>
</reference>
<reference key="20">
    <citation type="journal article" date="2011" name="Nat. Immunol.">
        <title>A motif in the V3 domain of the kinase PKC-theta determines its localization in the immunological synapse and functions in T cells via association with CD28.</title>
        <authorList>
            <person name="Kong K.F."/>
            <person name="Yokosuka T."/>
            <person name="Canonigo-Balancio A.J."/>
            <person name="Isakov N."/>
            <person name="Saito T."/>
            <person name="Altman A."/>
        </authorList>
    </citation>
    <scope>FUNCTION</scope>
    <scope>INTERACTION WITH PRKCQ</scope>
</reference>
<reference key="21">
    <citation type="journal article" date="2014" name="Biochem. J.">
        <title>T-cell co-stimulation through the CD2 and CD28 co-receptors induces distinct signalling responses.</title>
        <authorList>
            <person name="Skaanland S.S."/>
            <person name="Moltu K."/>
            <person name="Berge T."/>
            <person name="Aandahl E.M."/>
            <person name="Tasken K."/>
        </authorList>
    </citation>
    <scope>FUNCTION</scope>
</reference>
<reference key="22">
    <citation type="journal article" date="2005" name="Nat. Immunol.">
        <title>Crystal structure of a soluble CD28-Fab complex.</title>
        <authorList>
            <person name="Evans E.J."/>
            <person name="Esnouf R.M."/>
            <person name="Manso-Sancho R."/>
            <person name="Gilbert R.J."/>
            <person name="James J.R."/>
            <person name="Yu C."/>
            <person name="Fennelly J.A."/>
            <person name="Vowles C."/>
            <person name="Hanke T."/>
            <person name="Walse B."/>
            <person name="Hunig T."/>
            <person name="Sorensen P."/>
            <person name="Stuart D.I."/>
            <person name="Davis S.J."/>
        </authorList>
    </citation>
    <scope>X-RAY CRYSTALLOGRAPHY (2.7 ANGSTROMS) OF 17-152 IN COMPLEX WITH THE FAB FRAGMENT OF A MITOGENIC ANTIBODY</scope>
    <scope>DISULFIDE BONDS</scope>
    <scope>GLYCOSYLATION AT ASN-37 AND ASN-105</scope>
</reference>
<reference key="23">
    <citation type="journal article" date="2013" name="PLoS ONE">
        <title>High resolution crystal structure of the Grb2 SH2 domain with a phosphopeptide derived from CD28.</title>
        <authorList>
            <person name="Higo K."/>
            <person name="Ikura T."/>
            <person name="Oda M."/>
            <person name="Morii H."/>
            <person name="Takahashi J."/>
            <person name="Abe R."/>
            <person name="Ito N."/>
        </authorList>
    </citation>
    <scope>X-RAY CRYSTALLOGRAPHY (1.35 ANGSTROMS) OF 189-196 IN COMPLEX WITH GRB2</scope>
    <scope>INTERACTION WITH GRB2</scope>
</reference>
<reference evidence="19" key="24">
    <citation type="journal article" date="2022" name="Nat. Commun.">
        <title>Structural insights into the pSer/pThr dependent regulation of the SHP2 tyrosine phosphatase in insulin and CD28 signaling.</title>
        <authorList>
            <person name="Zeke A."/>
            <person name="Takacs T."/>
            <person name="Sok P."/>
            <person name="Nemeth K."/>
            <person name="Kirsch K."/>
            <person name="Egri P."/>
            <person name="Poti A.L."/>
            <person name="Bento I."/>
            <person name="Tusnady G.E."/>
            <person name="Remenyi A."/>
        </authorList>
    </citation>
    <scope>X-RAY CRYSTALLOGRAPHY (1.90 ANGSTROMS) OF 183-198</scope>
    <scope>DEPHOSPHORYLATION BY PTPN11</scope>
</reference>
<reference evidence="20" key="25">
    <citation type="journal article" date="2022" name="Structure">
        <title>Structural characterization of a dimerization interface in the CD28 transmembrane domain.</title>
        <authorList>
            <person name="Wu H."/>
            <person name="Cao R."/>
            <person name="Wen M."/>
            <person name="Xue H."/>
            <person name="OuYang B."/>
        </authorList>
    </citation>
    <scope>STRUCTURE BY NMR OF 148-188</scope>
    <scope>SUBUNIT</scope>
    <scope>SUBCELLULAR LOCATION</scope>
    <scope>FUNCTION</scope>
    <scope>MUTAGENESIS OF GLY-160 AND ALA-164</scope>
</reference>
<reference key="26">
    <citation type="journal article" date="2021" name="Cell">
        <title>Humans with inherited T cell CD28 deficiency are susceptible to skin papillomaviruses but are otherwise healthy.</title>
        <authorList>
            <person name="Beziat V."/>
            <person name="Rapaport F."/>
            <person name="Hu J."/>
            <person name="Titeux M."/>
            <person name="Bonnet des Claustres M."/>
            <person name="Bourgey M."/>
            <person name="Griffin H."/>
            <person name="Bandet E."/>
            <person name="Ma C.S."/>
            <person name="Sherkat R."/>
            <person name="Rokni-Zadeh H."/>
            <person name="Louis D.M."/>
            <person name="Changi-Ashtiani M."/>
            <person name="Delmonte O.M."/>
            <person name="Fukushima T."/>
            <person name="Habib T."/>
            <person name="Guennoun A."/>
            <person name="Khan T."/>
            <person name="Bender N."/>
            <person name="Rahman M."/>
            <person name="About F."/>
            <person name="Yang R."/>
            <person name="Rao G."/>
            <person name="Rouzaud C."/>
            <person name="Li J."/>
            <person name="Shearer D."/>
            <person name="Balogh K."/>
            <person name="Al Ali F."/>
            <person name="Ata M."/>
            <person name="Dabiri S."/>
            <person name="Momenilandi M."/>
            <person name="Nammour J."/>
            <person name="Alyanakian M.A."/>
            <person name="Leruez-Ville M."/>
            <person name="Guenat D."/>
            <person name="Materna M."/>
            <person name="Marcot L."/>
            <person name="Vladikine N."/>
            <person name="Soret C."/>
            <person name="Vahidnezhad H."/>
            <person name="Youssefian L."/>
            <person name="Saeidian A.H."/>
            <person name="Uitto J."/>
            <person name="Catherinot E."/>
            <person name="Navabi S.S."/>
            <person name="Zarhrate M."/>
            <person name="Woodley D.T."/>
            <person name="Jeljeli M."/>
            <person name="Abraham T."/>
            <person name="Belkaya S."/>
            <person name="Lorenzo L."/>
            <person name="Rosain J."/>
            <person name="Bayat M."/>
            <person name="Lanternier F."/>
            <person name="Lortholary O."/>
            <person name="Zakavi F."/>
            <person name="Gros P."/>
            <person name="Orth G."/>
            <person name="Abel L."/>
            <person name="Pretet J.L."/>
            <person name="Fraitag S."/>
            <person name="Jouanguy E."/>
            <person name="Davis M.M."/>
            <person name="Tangye S.G."/>
            <person name="Notarangelo L.D."/>
            <person name="Marr N."/>
            <person name="Waterboer T."/>
            <person name="Langlais D."/>
            <person name="Doorbar J."/>
            <person name="Hovnanian A."/>
            <person name="Christensen N."/>
            <person name="Bossuyt X."/>
            <person name="Shahrooei M."/>
            <person name="Casanova J.L."/>
        </authorList>
    </citation>
    <scope>VARIANT IMD123 ARG-18</scope>
    <scope>INVOLVEMENT IN IMD123</scope>
    <scope>CHARACTERIZATION OF VARIANT IMD123 ARG-18</scope>
</reference>
<protein>
    <recommendedName>
        <fullName>T-cell-specific surface glycoprotein CD28</fullName>
    </recommendedName>
    <alternativeName>
        <fullName>TP44</fullName>
    </alternativeName>
    <cdAntigenName>CD28</cdAntigenName>
</protein>
<keyword id="KW-0002">3D-structure</keyword>
<keyword id="KW-0025">Alternative splicing</keyword>
<keyword id="KW-1003">Cell membrane</keyword>
<keyword id="KW-0225">Disease variant</keyword>
<keyword id="KW-1015">Disulfide bond</keyword>
<keyword id="KW-0325">Glycoprotein</keyword>
<keyword id="KW-0393">Immunoglobulin domain</keyword>
<keyword id="KW-0472">Membrane</keyword>
<keyword id="KW-0597">Phosphoprotein</keyword>
<keyword id="KW-1267">Proteomics identification</keyword>
<keyword id="KW-0675">Receptor</keyword>
<keyword id="KW-1185">Reference proteome</keyword>
<keyword id="KW-0732">Signal</keyword>
<keyword id="KW-0812">Transmembrane</keyword>
<keyword id="KW-1133">Transmembrane helix</keyword>
<accession>P10747</accession>
<accession>A8KAC1</accession>
<accession>Q13964</accession>
<accession>Q52M23</accession>
<accession>Q70WG0</accession>
<accession>Q8NI54</accession>
<accession>Q8NI55</accession>
<accession>Q8NI56</accession>
<accession>Q8WXJ2</accession>
<accession>Q9BYV0</accession>
<sequence>MLRLLLALNLFPSIQVTGNKILVKQSPMLVAYDNAVNLSCKYSYNLFSREFRASLHKGLDSAVEVCVVYGNYSQQLQVYSKTGFNCDGKLGNESVTFYLQNLYVNQTDIYFCKIEVMYPPPYLDNEKSNGTIIHVKGKHLCPSPLFPGPSKPFWVLVVVGGVLACYSLLVTVAFIIFWVRSKRSRLLHSDYMNMTPRRPGPTRKHYQPYAPPRDFAAYRS</sequence>
<organism>
    <name type="scientific">Homo sapiens</name>
    <name type="common">Human</name>
    <dbReference type="NCBI Taxonomy" id="9606"/>
    <lineage>
        <taxon>Eukaryota</taxon>
        <taxon>Metazoa</taxon>
        <taxon>Chordata</taxon>
        <taxon>Craniata</taxon>
        <taxon>Vertebrata</taxon>
        <taxon>Euteleostomi</taxon>
        <taxon>Mammalia</taxon>
        <taxon>Eutheria</taxon>
        <taxon>Euarchontoglires</taxon>
        <taxon>Primates</taxon>
        <taxon>Haplorrhini</taxon>
        <taxon>Catarrhini</taxon>
        <taxon>Hominidae</taxon>
        <taxon>Homo</taxon>
    </lineage>
</organism>
<proteinExistence type="evidence at protein level"/>